<gene>
    <name type="primary">NPF5.14</name>
    <name type="synonym">NRT1.15</name>
    <name type="ordered locus">At1g72120</name>
    <name type="ORF">F28P5.2</name>
</gene>
<accession>Q8VZE2</accession>
<accession>Q9C7H5</accession>
<sequence>MTTTSEISLQEEYVTDAVDHRGLAARRSNTGRWRAALFIIGVEVAERFAYYGIGSNLISYLTGPLGESTAVAAANVNAWSGIATLLPVLGAFVADAFLGRYRTIIISSLIYVLGLAFLTLSAFLIPNTTEVTSSTSSFLNVLFFFSLYLVAIGQSGHKPCVQAFGADQFDEKDSQEKSDRSSFFNWWYLSLSAGICFAILVVVYIQEEFSWAFGFGIPCVFMVISLVLFVSGRRIYRYSKRRHEEEINPFTRIGRVFFVALKNQRLSSSDLCKVELEANTSPEKQSFFNKALLVPNDSSQGENASKSSDVEDATALIRLIPVWFTTLAYAIPYAQYMTFFTKQGVTMDRTILPGVKIPPASLQVFIGISIVLFVPIYDRVFVPIARLITKEPCGITTLKRIGTGIVLSTITMVIAALVEFKRLETAKEHGLIDQPEATLPMSIWWLIPQYLLLGLADVYTLVGMQEFFYSQVPTELRSIGLALYLSALGVGSLLSSLLISLIDLATGGDAGNSWFNSNLNRAHLDYFYWLLAIVSAVGFFTFLFISKSYIYRRVDRV</sequence>
<protein>
    <recommendedName>
        <fullName>Protein NRT1/ PTR FAMILY 5.14</fullName>
        <shortName>AtNPF5.14</shortName>
    </recommendedName>
    <alternativeName>
        <fullName>Nitrate transporter 1.15</fullName>
    </alternativeName>
</protein>
<comment type="subcellular location">
    <subcellularLocation>
        <location evidence="1">Membrane</location>
        <topology evidence="1">Multi-pass membrane protein</topology>
    </subcellularLocation>
</comment>
<comment type="tissue specificity">
    <text evidence="4">Expressed in roots.</text>
</comment>
<comment type="similarity">
    <text evidence="5">Belongs to the major facilitator superfamily. Proton-dependent oligopeptide transporter (POT/PTR) (TC 2.A.17) family.</text>
</comment>
<comment type="sequence caution" evidence="5">
    <conflict type="erroneous gene model prediction">
        <sequence resource="EMBL-CDS" id="AAG51133"/>
    </conflict>
    <text>The predicted gene At1g72120 has been split into 2 genes: At1g72120 and At1g72115.</text>
</comment>
<feature type="chain" id="PRO_0000399956" description="Protein NRT1/ PTR FAMILY 5.14">
    <location>
        <begin position="1"/>
        <end position="557"/>
    </location>
</feature>
<feature type="transmembrane region" description="Helical" evidence="3">
    <location>
        <begin position="35"/>
        <end position="55"/>
    </location>
</feature>
<feature type="transmembrane region" description="Helical" evidence="3">
    <location>
        <begin position="78"/>
        <end position="98"/>
    </location>
</feature>
<feature type="transmembrane region" description="Helical" evidence="3">
    <location>
        <begin position="104"/>
        <end position="124"/>
    </location>
</feature>
<feature type="transmembrane region" description="Helical" evidence="3">
    <location>
        <begin position="133"/>
        <end position="153"/>
    </location>
</feature>
<feature type="transmembrane region" description="Helical" evidence="3">
    <location>
        <begin position="183"/>
        <end position="203"/>
    </location>
</feature>
<feature type="transmembrane region" description="Helical" evidence="3">
    <location>
        <begin position="209"/>
        <end position="229"/>
    </location>
</feature>
<feature type="transmembrane region" description="Helical" evidence="3">
    <location>
        <begin position="320"/>
        <end position="340"/>
    </location>
</feature>
<feature type="transmembrane region" description="Helical" evidence="3">
    <location>
        <begin position="357"/>
        <end position="377"/>
    </location>
</feature>
<feature type="transmembrane region" description="Helical" evidence="3">
    <location>
        <begin position="401"/>
        <end position="421"/>
    </location>
</feature>
<feature type="transmembrane region" description="Helical" evidence="3">
    <location>
        <begin position="443"/>
        <end position="463"/>
    </location>
</feature>
<feature type="transmembrane region" description="Helical" evidence="3">
    <location>
        <begin position="479"/>
        <end position="499"/>
    </location>
</feature>
<feature type="transmembrane region" description="Helical" evidence="3">
    <location>
        <begin position="526"/>
        <end position="546"/>
    </location>
</feature>
<feature type="modified residue" description="Phosphothreonine" evidence="2">
    <location>
        <position position="103"/>
    </location>
</feature>
<feature type="sequence conflict" description="In Ref. 3; AAL57662/AAN46774." evidence="5" ref="3">
    <original>A</original>
    <variation>D</variation>
    <location>
        <position position="24"/>
    </location>
</feature>
<name>PTR22_ARATH</name>
<organism>
    <name type="scientific">Arabidopsis thaliana</name>
    <name type="common">Mouse-ear cress</name>
    <dbReference type="NCBI Taxonomy" id="3702"/>
    <lineage>
        <taxon>Eukaryota</taxon>
        <taxon>Viridiplantae</taxon>
        <taxon>Streptophyta</taxon>
        <taxon>Embryophyta</taxon>
        <taxon>Tracheophyta</taxon>
        <taxon>Spermatophyta</taxon>
        <taxon>Magnoliopsida</taxon>
        <taxon>eudicotyledons</taxon>
        <taxon>Gunneridae</taxon>
        <taxon>Pentapetalae</taxon>
        <taxon>rosids</taxon>
        <taxon>malvids</taxon>
        <taxon>Brassicales</taxon>
        <taxon>Brassicaceae</taxon>
        <taxon>Camelineae</taxon>
        <taxon>Arabidopsis</taxon>
    </lineage>
</organism>
<reference key="1">
    <citation type="journal article" date="2000" name="Nature">
        <title>Sequence and analysis of chromosome 1 of the plant Arabidopsis thaliana.</title>
        <authorList>
            <person name="Theologis A."/>
            <person name="Ecker J.R."/>
            <person name="Palm C.J."/>
            <person name="Federspiel N.A."/>
            <person name="Kaul S."/>
            <person name="White O."/>
            <person name="Alonso J."/>
            <person name="Altafi H."/>
            <person name="Araujo R."/>
            <person name="Bowman C.L."/>
            <person name="Brooks S.Y."/>
            <person name="Buehler E."/>
            <person name="Chan A."/>
            <person name="Chao Q."/>
            <person name="Chen H."/>
            <person name="Cheuk R.F."/>
            <person name="Chin C.W."/>
            <person name="Chung M.K."/>
            <person name="Conn L."/>
            <person name="Conway A.B."/>
            <person name="Conway A.R."/>
            <person name="Creasy T.H."/>
            <person name="Dewar K."/>
            <person name="Dunn P."/>
            <person name="Etgu P."/>
            <person name="Feldblyum T.V."/>
            <person name="Feng J.-D."/>
            <person name="Fong B."/>
            <person name="Fujii C.Y."/>
            <person name="Gill J.E."/>
            <person name="Goldsmith A.D."/>
            <person name="Haas B."/>
            <person name="Hansen N.F."/>
            <person name="Hughes B."/>
            <person name="Huizar L."/>
            <person name="Hunter J.L."/>
            <person name="Jenkins J."/>
            <person name="Johnson-Hopson C."/>
            <person name="Khan S."/>
            <person name="Khaykin E."/>
            <person name="Kim C.J."/>
            <person name="Koo H.L."/>
            <person name="Kremenetskaia I."/>
            <person name="Kurtz D.B."/>
            <person name="Kwan A."/>
            <person name="Lam B."/>
            <person name="Langin-Hooper S."/>
            <person name="Lee A."/>
            <person name="Lee J.M."/>
            <person name="Lenz C.A."/>
            <person name="Li J.H."/>
            <person name="Li Y.-P."/>
            <person name="Lin X."/>
            <person name="Liu S.X."/>
            <person name="Liu Z.A."/>
            <person name="Luros J.S."/>
            <person name="Maiti R."/>
            <person name="Marziali A."/>
            <person name="Militscher J."/>
            <person name="Miranda M."/>
            <person name="Nguyen M."/>
            <person name="Nierman W.C."/>
            <person name="Osborne B.I."/>
            <person name="Pai G."/>
            <person name="Peterson J."/>
            <person name="Pham P.K."/>
            <person name="Rizzo M."/>
            <person name="Rooney T."/>
            <person name="Rowley D."/>
            <person name="Sakano H."/>
            <person name="Salzberg S.L."/>
            <person name="Schwartz J.R."/>
            <person name="Shinn P."/>
            <person name="Southwick A.M."/>
            <person name="Sun H."/>
            <person name="Tallon L.J."/>
            <person name="Tambunga G."/>
            <person name="Toriumi M.J."/>
            <person name="Town C.D."/>
            <person name="Utterback T."/>
            <person name="Van Aken S."/>
            <person name="Vaysberg M."/>
            <person name="Vysotskaia V.S."/>
            <person name="Walker M."/>
            <person name="Wu D."/>
            <person name="Yu G."/>
            <person name="Fraser C.M."/>
            <person name="Venter J.C."/>
            <person name="Davis R.W."/>
        </authorList>
    </citation>
    <scope>NUCLEOTIDE SEQUENCE [LARGE SCALE GENOMIC DNA]</scope>
    <source>
        <strain>cv. Columbia</strain>
    </source>
</reference>
<reference key="2">
    <citation type="journal article" date="2017" name="Plant J.">
        <title>Araport11: a complete reannotation of the Arabidopsis thaliana reference genome.</title>
        <authorList>
            <person name="Cheng C.Y."/>
            <person name="Krishnakumar V."/>
            <person name="Chan A.P."/>
            <person name="Thibaud-Nissen F."/>
            <person name="Schobel S."/>
            <person name="Town C.D."/>
        </authorList>
    </citation>
    <scope>GENOME REANNOTATION</scope>
    <source>
        <strain>cv. Columbia</strain>
    </source>
</reference>
<reference key="3">
    <citation type="journal article" date="2003" name="Science">
        <title>Empirical analysis of transcriptional activity in the Arabidopsis genome.</title>
        <authorList>
            <person name="Yamada K."/>
            <person name="Lim J."/>
            <person name="Dale J.M."/>
            <person name="Chen H."/>
            <person name="Shinn P."/>
            <person name="Palm C.J."/>
            <person name="Southwick A.M."/>
            <person name="Wu H.C."/>
            <person name="Kim C.J."/>
            <person name="Nguyen M."/>
            <person name="Pham P.K."/>
            <person name="Cheuk R.F."/>
            <person name="Karlin-Newmann G."/>
            <person name="Liu S.X."/>
            <person name="Lam B."/>
            <person name="Sakano H."/>
            <person name="Wu T."/>
            <person name="Yu G."/>
            <person name="Miranda M."/>
            <person name="Quach H.L."/>
            <person name="Tripp M."/>
            <person name="Chang C.H."/>
            <person name="Lee J.M."/>
            <person name="Toriumi M.J."/>
            <person name="Chan M.M."/>
            <person name="Tang C.C."/>
            <person name="Onodera C.S."/>
            <person name="Deng J.M."/>
            <person name="Akiyama K."/>
            <person name="Ansari Y."/>
            <person name="Arakawa T."/>
            <person name="Banh J."/>
            <person name="Banno F."/>
            <person name="Bowser L."/>
            <person name="Brooks S.Y."/>
            <person name="Carninci P."/>
            <person name="Chao Q."/>
            <person name="Choy N."/>
            <person name="Enju A."/>
            <person name="Goldsmith A.D."/>
            <person name="Gurjal M."/>
            <person name="Hansen N.F."/>
            <person name="Hayashizaki Y."/>
            <person name="Johnson-Hopson C."/>
            <person name="Hsuan V.W."/>
            <person name="Iida K."/>
            <person name="Karnes M."/>
            <person name="Khan S."/>
            <person name="Koesema E."/>
            <person name="Ishida J."/>
            <person name="Jiang P.X."/>
            <person name="Jones T."/>
            <person name="Kawai J."/>
            <person name="Kamiya A."/>
            <person name="Meyers C."/>
            <person name="Nakajima M."/>
            <person name="Narusaka M."/>
            <person name="Seki M."/>
            <person name="Sakurai T."/>
            <person name="Satou M."/>
            <person name="Tamse R."/>
            <person name="Vaysberg M."/>
            <person name="Wallender E.K."/>
            <person name="Wong C."/>
            <person name="Yamamura Y."/>
            <person name="Yuan S."/>
            <person name="Shinozaki K."/>
            <person name="Davis R.W."/>
            <person name="Theologis A."/>
            <person name="Ecker J.R."/>
        </authorList>
    </citation>
    <scope>NUCLEOTIDE SEQUENCE [LARGE SCALE MRNA]</scope>
    <source>
        <strain>cv. Columbia</strain>
    </source>
</reference>
<reference key="4">
    <citation type="journal article" date="2007" name="FEBS Lett.">
        <title>Nitrate transporters and peptide transporters.</title>
        <authorList>
            <person name="Tsay Y.F."/>
            <person name="Chiu C.C."/>
            <person name="Tsai C.B."/>
            <person name="Ho C.H."/>
            <person name="Hsu P.K."/>
        </authorList>
    </citation>
    <scope>TISSUE SPECIFICITY</scope>
    <scope>GENE FAMILY</scope>
</reference>
<reference key="5">
    <citation type="journal article" date="2010" name="Plant Cell">
        <title>The Arabidopsis nitrate transporter NRT1.8 functions in nitrate removal from the xylem sap and mediates cadmium tolerance.</title>
        <authorList>
            <person name="Li J.Y."/>
            <person name="Fu Y.L."/>
            <person name="Pike S.M."/>
            <person name="Bao J."/>
            <person name="Tian W."/>
            <person name="Zhang Y."/>
            <person name="Chen C.Z."/>
            <person name="Zhang Y."/>
            <person name="Li H.M."/>
            <person name="Huang J."/>
            <person name="Li L.G."/>
            <person name="Schroeder J.I."/>
            <person name="Gassmann W."/>
            <person name="Gong J.M."/>
        </authorList>
    </citation>
    <scope>GENE FAMILY</scope>
</reference>
<reference key="6">
    <citation type="journal article" date="2014" name="Trends Plant Sci.">
        <title>A unified nomenclature of NITRATE TRANSPORTER 1/PEPTIDE TRANSPORTER family members in plants.</title>
        <authorList>
            <person name="Leran S."/>
            <person name="Varala K."/>
            <person name="Boyer J.C."/>
            <person name="Chiurazzi M."/>
            <person name="Crawford N."/>
            <person name="Daniel-Vedele F."/>
            <person name="David L."/>
            <person name="Dickstein R."/>
            <person name="Fernandez E."/>
            <person name="Forde B."/>
            <person name="Gassmann W."/>
            <person name="Geiger D."/>
            <person name="Gojon A."/>
            <person name="Gong J.M."/>
            <person name="Halkier B.A."/>
            <person name="Harris J.M."/>
            <person name="Hedrich R."/>
            <person name="Limami A.M."/>
            <person name="Rentsch D."/>
            <person name="Seo M."/>
            <person name="Tsay Y.F."/>
            <person name="Zhang M."/>
            <person name="Coruzzi G."/>
            <person name="Lacombe B."/>
        </authorList>
    </citation>
    <scope>GENE FAMILY</scope>
    <scope>NOMENCLATURE</scope>
</reference>
<dbReference type="EMBL" id="AC069273">
    <property type="protein sequence ID" value="AAG51133.1"/>
    <property type="status" value="ALT_SEQ"/>
    <property type="molecule type" value="Genomic_DNA"/>
</dbReference>
<dbReference type="EMBL" id="CP002684">
    <property type="protein sequence ID" value="AEE35276.1"/>
    <property type="molecule type" value="Genomic_DNA"/>
</dbReference>
<dbReference type="EMBL" id="AY065020">
    <property type="protein sequence ID" value="AAL57662.1"/>
    <property type="molecule type" value="mRNA"/>
</dbReference>
<dbReference type="EMBL" id="BT001020">
    <property type="protein sequence ID" value="AAN46774.1"/>
    <property type="molecule type" value="mRNA"/>
</dbReference>
<dbReference type="RefSeq" id="NP_177357.2">
    <property type="nucleotide sequence ID" value="NM_105870.4"/>
</dbReference>
<dbReference type="SMR" id="Q8VZE2"/>
<dbReference type="FunCoup" id="Q8VZE2">
    <property type="interactions" value="175"/>
</dbReference>
<dbReference type="STRING" id="3702.Q8VZE2"/>
<dbReference type="iPTMnet" id="Q8VZE2"/>
<dbReference type="PaxDb" id="3702-AT1G72120.1"/>
<dbReference type="ProteomicsDB" id="224839"/>
<dbReference type="EnsemblPlants" id="AT1G72120.1">
    <property type="protein sequence ID" value="AT1G72120.1"/>
    <property type="gene ID" value="AT1G72120"/>
</dbReference>
<dbReference type="GeneID" id="843543"/>
<dbReference type="Gramene" id="AT1G72120.1">
    <property type="protein sequence ID" value="AT1G72120.1"/>
    <property type="gene ID" value="AT1G72120"/>
</dbReference>
<dbReference type="KEGG" id="ath:AT1G72120"/>
<dbReference type="Araport" id="AT1G72120"/>
<dbReference type="TAIR" id="AT1G72120">
    <property type="gene designation" value="NPF5.14"/>
</dbReference>
<dbReference type="eggNOG" id="KOG1237">
    <property type="taxonomic scope" value="Eukaryota"/>
</dbReference>
<dbReference type="HOGENOM" id="CLU_009313_4_1_1"/>
<dbReference type="InParanoid" id="Q8VZE2"/>
<dbReference type="OMA" id="WFNINLN"/>
<dbReference type="PRO" id="PR:Q8VZE2"/>
<dbReference type="Proteomes" id="UP000006548">
    <property type="component" value="Chromosome 1"/>
</dbReference>
<dbReference type="ExpressionAtlas" id="Q8VZE2">
    <property type="expression patterns" value="baseline and differential"/>
</dbReference>
<dbReference type="GO" id="GO:0016020">
    <property type="term" value="C:membrane"/>
    <property type="evidence" value="ECO:0007669"/>
    <property type="project" value="UniProtKB-SubCell"/>
</dbReference>
<dbReference type="GO" id="GO:0071916">
    <property type="term" value="F:dipeptide transmembrane transporter activity"/>
    <property type="evidence" value="ECO:0007669"/>
    <property type="project" value="InterPro"/>
</dbReference>
<dbReference type="GO" id="GO:0042937">
    <property type="term" value="F:tripeptide transmembrane transporter activity"/>
    <property type="evidence" value="ECO:0007669"/>
    <property type="project" value="InterPro"/>
</dbReference>
<dbReference type="CDD" id="cd17417">
    <property type="entry name" value="MFS_NPF5"/>
    <property type="match status" value="1"/>
</dbReference>
<dbReference type="FunFam" id="1.20.1250.20:FF:000147">
    <property type="entry name" value="Protein NRT1/ PTR family 5.10"/>
    <property type="match status" value="1"/>
</dbReference>
<dbReference type="Gene3D" id="1.20.1250.20">
    <property type="entry name" value="MFS general substrate transporter like domains"/>
    <property type="match status" value="1"/>
</dbReference>
<dbReference type="InterPro" id="IPR036259">
    <property type="entry name" value="MFS_trans_sf"/>
</dbReference>
<dbReference type="InterPro" id="IPR044739">
    <property type="entry name" value="NRT1/PTR"/>
</dbReference>
<dbReference type="InterPro" id="IPR000109">
    <property type="entry name" value="POT_fam"/>
</dbReference>
<dbReference type="InterPro" id="IPR018456">
    <property type="entry name" value="PTR2_symporter_CS"/>
</dbReference>
<dbReference type="PANTHER" id="PTHR11654">
    <property type="entry name" value="OLIGOPEPTIDE TRANSPORTER-RELATED"/>
    <property type="match status" value="1"/>
</dbReference>
<dbReference type="Pfam" id="PF00854">
    <property type="entry name" value="PTR2"/>
    <property type="match status" value="1"/>
</dbReference>
<dbReference type="SUPFAM" id="SSF103473">
    <property type="entry name" value="MFS general substrate transporter"/>
    <property type="match status" value="1"/>
</dbReference>
<dbReference type="PROSITE" id="PS01022">
    <property type="entry name" value="PTR2_1"/>
    <property type="match status" value="1"/>
</dbReference>
<keyword id="KW-0472">Membrane</keyword>
<keyword id="KW-0597">Phosphoprotein</keyword>
<keyword id="KW-1185">Reference proteome</keyword>
<keyword id="KW-0812">Transmembrane</keyword>
<keyword id="KW-1133">Transmembrane helix</keyword>
<keyword id="KW-0813">Transport</keyword>
<proteinExistence type="evidence at transcript level"/>
<evidence type="ECO:0000250" key="1"/>
<evidence type="ECO:0000250" key="2">
    <source>
        <dbReference type="UniProtKB" id="Q05085"/>
    </source>
</evidence>
<evidence type="ECO:0000255" key="3"/>
<evidence type="ECO:0000269" key="4">
    <source>
    </source>
</evidence>
<evidence type="ECO:0000305" key="5"/>